<proteinExistence type="inferred from homology"/>
<protein>
    <recommendedName>
        <fullName evidence="1">Large ribosomal subunit protein bL12</fullName>
    </recommendedName>
    <alternativeName>
        <fullName evidence="2">50S ribosomal protein L7/L12</fullName>
    </alternativeName>
</protein>
<comment type="function">
    <text evidence="1">Forms part of the ribosomal stalk which helps the ribosome interact with GTP-bound translation factors. Is thus essential for accurate translation.</text>
</comment>
<comment type="subunit">
    <text evidence="1">Homodimer. Part of the ribosomal stalk of the 50S ribosomal subunit. Forms a multimeric L10(L12)X complex, where L10 forms an elongated spine to which 2 to 4 L12 dimers bind in a sequential fashion. Binds GTP-bound translation factors.</text>
</comment>
<comment type="similarity">
    <text evidence="1">Belongs to the bacterial ribosomal protein bL12 family.</text>
</comment>
<keyword id="KW-0687">Ribonucleoprotein</keyword>
<keyword id="KW-0689">Ribosomal protein</keyword>
<dbReference type="EMBL" id="AE015929">
    <property type="protein sequence ID" value="AAO03901.1"/>
    <property type="molecule type" value="Genomic_DNA"/>
</dbReference>
<dbReference type="RefSeq" id="NP_763859.1">
    <property type="nucleotide sequence ID" value="NC_004461.1"/>
</dbReference>
<dbReference type="RefSeq" id="WP_001832283.1">
    <property type="nucleotide sequence ID" value="NZ_WBME01000014.1"/>
</dbReference>
<dbReference type="SMR" id="Q8CTT1"/>
<dbReference type="GeneID" id="50019531"/>
<dbReference type="KEGG" id="sep:SE_0304"/>
<dbReference type="PATRIC" id="fig|176280.10.peg.279"/>
<dbReference type="eggNOG" id="COG0222">
    <property type="taxonomic scope" value="Bacteria"/>
</dbReference>
<dbReference type="HOGENOM" id="CLU_086499_3_2_9"/>
<dbReference type="OrthoDB" id="9811748at2"/>
<dbReference type="Proteomes" id="UP000001411">
    <property type="component" value="Chromosome"/>
</dbReference>
<dbReference type="GO" id="GO:0022625">
    <property type="term" value="C:cytosolic large ribosomal subunit"/>
    <property type="evidence" value="ECO:0007669"/>
    <property type="project" value="TreeGrafter"/>
</dbReference>
<dbReference type="GO" id="GO:0003729">
    <property type="term" value="F:mRNA binding"/>
    <property type="evidence" value="ECO:0007669"/>
    <property type="project" value="TreeGrafter"/>
</dbReference>
<dbReference type="GO" id="GO:0003735">
    <property type="term" value="F:structural constituent of ribosome"/>
    <property type="evidence" value="ECO:0007669"/>
    <property type="project" value="InterPro"/>
</dbReference>
<dbReference type="GO" id="GO:0006412">
    <property type="term" value="P:translation"/>
    <property type="evidence" value="ECO:0007669"/>
    <property type="project" value="UniProtKB-UniRule"/>
</dbReference>
<dbReference type="CDD" id="cd00387">
    <property type="entry name" value="Ribosomal_L7_L12"/>
    <property type="match status" value="1"/>
</dbReference>
<dbReference type="FunFam" id="1.20.5.710:FF:000002">
    <property type="entry name" value="50S ribosomal protein L7/L12"/>
    <property type="match status" value="1"/>
</dbReference>
<dbReference type="FunFam" id="3.30.1390.10:FF:000001">
    <property type="entry name" value="50S ribosomal protein L7/L12"/>
    <property type="match status" value="1"/>
</dbReference>
<dbReference type="Gene3D" id="3.30.1390.10">
    <property type="match status" value="1"/>
</dbReference>
<dbReference type="Gene3D" id="1.20.5.710">
    <property type="entry name" value="Single helix bin"/>
    <property type="match status" value="1"/>
</dbReference>
<dbReference type="HAMAP" id="MF_00368">
    <property type="entry name" value="Ribosomal_bL12"/>
    <property type="match status" value="1"/>
</dbReference>
<dbReference type="InterPro" id="IPR000206">
    <property type="entry name" value="Ribosomal_bL12"/>
</dbReference>
<dbReference type="InterPro" id="IPR013823">
    <property type="entry name" value="Ribosomal_bL12_C"/>
</dbReference>
<dbReference type="InterPro" id="IPR014719">
    <property type="entry name" value="Ribosomal_bL12_C/ClpS-like"/>
</dbReference>
<dbReference type="InterPro" id="IPR008932">
    <property type="entry name" value="Ribosomal_bL12_oligo"/>
</dbReference>
<dbReference type="InterPro" id="IPR036235">
    <property type="entry name" value="Ribosomal_bL12_oligo_N_sf"/>
</dbReference>
<dbReference type="NCBIfam" id="TIGR00855">
    <property type="entry name" value="L12"/>
    <property type="match status" value="1"/>
</dbReference>
<dbReference type="PANTHER" id="PTHR45987">
    <property type="entry name" value="39S RIBOSOMAL PROTEIN L12"/>
    <property type="match status" value="1"/>
</dbReference>
<dbReference type="PANTHER" id="PTHR45987:SF4">
    <property type="entry name" value="LARGE RIBOSOMAL SUBUNIT PROTEIN BL12M"/>
    <property type="match status" value="1"/>
</dbReference>
<dbReference type="Pfam" id="PF00542">
    <property type="entry name" value="Ribosomal_L12"/>
    <property type="match status" value="1"/>
</dbReference>
<dbReference type="Pfam" id="PF16320">
    <property type="entry name" value="Ribosomal_L12_N"/>
    <property type="match status" value="1"/>
</dbReference>
<dbReference type="SUPFAM" id="SSF54736">
    <property type="entry name" value="ClpS-like"/>
    <property type="match status" value="1"/>
</dbReference>
<dbReference type="SUPFAM" id="SSF48300">
    <property type="entry name" value="Ribosomal protein L7/12, oligomerisation (N-terminal) domain"/>
    <property type="match status" value="1"/>
</dbReference>
<accession>Q8CTT1</accession>
<organism>
    <name type="scientific">Staphylococcus epidermidis (strain ATCC 12228 / FDA PCI 1200)</name>
    <dbReference type="NCBI Taxonomy" id="176280"/>
    <lineage>
        <taxon>Bacteria</taxon>
        <taxon>Bacillati</taxon>
        <taxon>Bacillota</taxon>
        <taxon>Bacilli</taxon>
        <taxon>Bacillales</taxon>
        <taxon>Staphylococcaceae</taxon>
        <taxon>Staphylococcus</taxon>
    </lineage>
</organism>
<gene>
    <name evidence="1" type="primary">rplL</name>
    <name type="ordered locus">SE_0304</name>
</gene>
<name>RL7_STAES</name>
<evidence type="ECO:0000255" key="1">
    <source>
        <dbReference type="HAMAP-Rule" id="MF_00368"/>
    </source>
</evidence>
<evidence type="ECO:0000305" key="2"/>
<reference key="1">
    <citation type="journal article" date="2003" name="Mol. Microbiol.">
        <title>Genome-based analysis of virulence genes in a non-biofilm-forming Staphylococcus epidermidis strain (ATCC 12228).</title>
        <authorList>
            <person name="Zhang Y.-Q."/>
            <person name="Ren S.-X."/>
            <person name="Li H.-L."/>
            <person name="Wang Y.-X."/>
            <person name="Fu G."/>
            <person name="Yang J."/>
            <person name="Qin Z.-Q."/>
            <person name="Miao Y.-G."/>
            <person name="Wang W.-Y."/>
            <person name="Chen R.-S."/>
            <person name="Shen Y."/>
            <person name="Chen Z."/>
            <person name="Yuan Z.-H."/>
            <person name="Zhao G.-P."/>
            <person name="Qu D."/>
            <person name="Danchin A."/>
            <person name="Wen Y.-M."/>
        </authorList>
    </citation>
    <scope>NUCLEOTIDE SEQUENCE [LARGE SCALE GENOMIC DNA]</scope>
    <source>
        <strain>ATCC 12228 / FDA PCI 1200</strain>
    </source>
</reference>
<sequence length="122" mass="12650">MANQEQIIEAIKEMSVLELNDLVKAIEEEFGVTAAAPVAAAGAAGGGDAAAEKTEFDVELTSAGSSKIKVVKAVKEATGLGLKDAKELVDGAPKVIKEAMPKEDAEKLKEQLEEVGASVELK</sequence>
<feature type="chain" id="PRO_0000157581" description="Large ribosomal subunit protein bL12">
    <location>
        <begin position="1"/>
        <end position="122"/>
    </location>
</feature>